<sequence>MGKLGENVPLLIDKAVDFMASSQAFREYLKKLPPRNAIPSGIPDESVPLYLQRLEYYRQLYRPKQVEEK</sequence>
<name>YIBT_ECOL6</name>
<feature type="chain" id="PRO_0000263015" description="Uncharacterized protein YibT">
    <location>
        <begin position="1"/>
        <end position="69"/>
    </location>
</feature>
<reference key="1">
    <citation type="journal article" date="2002" name="Proc. Natl. Acad. Sci. U.S.A.">
        <title>Extensive mosaic structure revealed by the complete genome sequence of uropathogenic Escherichia coli.</title>
        <authorList>
            <person name="Welch R.A."/>
            <person name="Burland V."/>
            <person name="Plunkett G. III"/>
            <person name="Redford P."/>
            <person name="Roesch P."/>
            <person name="Rasko D."/>
            <person name="Buckles E.L."/>
            <person name="Liou S.-R."/>
            <person name="Boutin A."/>
            <person name="Hackett J."/>
            <person name="Stroud D."/>
            <person name="Mayhew G.F."/>
            <person name="Rose D.J."/>
            <person name="Zhou S."/>
            <person name="Schwartz D.C."/>
            <person name="Perna N.T."/>
            <person name="Mobley H.L.T."/>
            <person name="Donnenberg M.S."/>
            <person name="Blattner F.R."/>
        </authorList>
    </citation>
    <scope>NUCLEOTIDE SEQUENCE [LARGE SCALE GENOMIC DNA]</scope>
    <source>
        <strain>CFT073 / ATCC 700928 / UPEC</strain>
    </source>
</reference>
<gene>
    <name type="primary">yibT</name>
    <name type="ordered locus">c4419</name>
</gene>
<dbReference type="EMBL" id="AE014075">
    <property type="protein sequence ID" value="AAN82855.1"/>
    <property type="molecule type" value="Genomic_DNA"/>
</dbReference>
<dbReference type="RefSeq" id="WP_000517097.1">
    <property type="nucleotide sequence ID" value="NZ_CP051263.1"/>
</dbReference>
<dbReference type="SMR" id="Q8FCB6"/>
<dbReference type="STRING" id="199310.c4419"/>
<dbReference type="KEGG" id="ecc:c4419"/>
<dbReference type="eggNOG" id="ENOG5032Z93">
    <property type="taxonomic scope" value="Bacteria"/>
</dbReference>
<dbReference type="HOGENOM" id="CLU_185147_0_0_6"/>
<dbReference type="BioCyc" id="ECOL199310:C4419-MONOMER"/>
<dbReference type="Proteomes" id="UP000001410">
    <property type="component" value="Chromosome"/>
</dbReference>
<protein>
    <recommendedName>
        <fullName>Uncharacterized protein YibT</fullName>
    </recommendedName>
</protein>
<organism>
    <name type="scientific">Escherichia coli O6:H1 (strain CFT073 / ATCC 700928 / UPEC)</name>
    <dbReference type="NCBI Taxonomy" id="199310"/>
    <lineage>
        <taxon>Bacteria</taxon>
        <taxon>Pseudomonadati</taxon>
        <taxon>Pseudomonadota</taxon>
        <taxon>Gammaproteobacteria</taxon>
        <taxon>Enterobacterales</taxon>
        <taxon>Enterobacteriaceae</taxon>
        <taxon>Escherichia</taxon>
    </lineage>
</organism>
<keyword id="KW-1185">Reference proteome</keyword>
<proteinExistence type="predicted"/>
<accession>Q8FCB6</accession>